<comment type="function">
    <text evidence="1">This protein specifically catalyzes the removal of signal peptides from prolipoproteins.</text>
</comment>
<comment type="catalytic activity">
    <reaction evidence="1">
        <text>Release of signal peptides from bacterial membrane prolipoproteins. Hydrolyzes -Xaa-Yaa-Zaa-|-(S,diacylglyceryl)Cys-, in which Xaa is hydrophobic (preferably Leu), and Yaa (Ala or Ser) and Zaa (Gly or Ala) have small, neutral side chains.</text>
        <dbReference type="EC" id="3.4.23.36"/>
    </reaction>
</comment>
<comment type="pathway">
    <text evidence="1">Protein modification; lipoprotein biosynthesis (signal peptide cleavage).</text>
</comment>
<comment type="subcellular location">
    <subcellularLocation>
        <location evidence="1">Cell membrane</location>
        <topology evidence="1">Multi-pass membrane protein</topology>
    </subcellularLocation>
</comment>
<comment type="similarity">
    <text evidence="1">Belongs to the peptidase A8 family.</text>
</comment>
<feature type="chain" id="PRO_0000289370" description="Lipoprotein signal peptidase">
    <location>
        <begin position="1"/>
        <end position="156"/>
    </location>
</feature>
<feature type="transmembrane region" description="Helical" evidence="1">
    <location>
        <begin position="57"/>
        <end position="77"/>
    </location>
</feature>
<feature type="transmembrane region" description="Helical" evidence="1">
    <location>
        <begin position="83"/>
        <end position="103"/>
    </location>
</feature>
<feature type="transmembrane region" description="Helical" evidence="1">
    <location>
        <begin position="124"/>
        <end position="144"/>
    </location>
</feature>
<feature type="active site" evidence="1">
    <location>
        <position position="110"/>
    </location>
</feature>
<feature type="active site" evidence="1">
    <location>
        <position position="129"/>
    </location>
</feature>
<gene>
    <name evidence="1" type="primary">lspA</name>
    <name type="ordered locus">CTC_01615</name>
</gene>
<dbReference type="EC" id="3.4.23.36" evidence="1"/>
<dbReference type="EMBL" id="AE015927">
    <property type="protein sequence ID" value="AAO36158.1"/>
    <property type="molecule type" value="Genomic_DNA"/>
</dbReference>
<dbReference type="RefSeq" id="WP_011099818.1">
    <property type="nucleotide sequence ID" value="NC_004557.1"/>
</dbReference>
<dbReference type="SMR" id="Q894D4"/>
<dbReference type="STRING" id="212717.CTC_01615"/>
<dbReference type="GeneID" id="24254168"/>
<dbReference type="KEGG" id="ctc:CTC_01615"/>
<dbReference type="HOGENOM" id="CLU_083252_3_4_9"/>
<dbReference type="OrthoDB" id="9810259at2"/>
<dbReference type="UniPathway" id="UPA00665"/>
<dbReference type="Proteomes" id="UP000001412">
    <property type="component" value="Chromosome"/>
</dbReference>
<dbReference type="GO" id="GO:0005886">
    <property type="term" value="C:plasma membrane"/>
    <property type="evidence" value="ECO:0007669"/>
    <property type="project" value="UniProtKB-SubCell"/>
</dbReference>
<dbReference type="GO" id="GO:0004190">
    <property type="term" value="F:aspartic-type endopeptidase activity"/>
    <property type="evidence" value="ECO:0007669"/>
    <property type="project" value="UniProtKB-UniRule"/>
</dbReference>
<dbReference type="GO" id="GO:0006508">
    <property type="term" value="P:proteolysis"/>
    <property type="evidence" value="ECO:0007669"/>
    <property type="project" value="UniProtKB-KW"/>
</dbReference>
<dbReference type="HAMAP" id="MF_00161">
    <property type="entry name" value="LspA"/>
    <property type="match status" value="1"/>
</dbReference>
<dbReference type="InterPro" id="IPR001872">
    <property type="entry name" value="Peptidase_A8"/>
</dbReference>
<dbReference type="NCBIfam" id="TIGR00077">
    <property type="entry name" value="lspA"/>
    <property type="match status" value="1"/>
</dbReference>
<dbReference type="PANTHER" id="PTHR33695">
    <property type="entry name" value="LIPOPROTEIN SIGNAL PEPTIDASE"/>
    <property type="match status" value="1"/>
</dbReference>
<dbReference type="PANTHER" id="PTHR33695:SF1">
    <property type="entry name" value="LIPOPROTEIN SIGNAL PEPTIDASE"/>
    <property type="match status" value="1"/>
</dbReference>
<dbReference type="Pfam" id="PF01252">
    <property type="entry name" value="Peptidase_A8"/>
    <property type="match status" value="1"/>
</dbReference>
<dbReference type="PRINTS" id="PR00781">
    <property type="entry name" value="LIPOSIGPTASE"/>
</dbReference>
<dbReference type="PROSITE" id="PS00855">
    <property type="entry name" value="SPASE_II"/>
    <property type="match status" value="1"/>
</dbReference>
<name>LSPA_CLOTE</name>
<evidence type="ECO:0000255" key="1">
    <source>
        <dbReference type="HAMAP-Rule" id="MF_00161"/>
    </source>
</evidence>
<reference key="1">
    <citation type="journal article" date="2003" name="Proc. Natl. Acad. Sci. U.S.A.">
        <title>The genome sequence of Clostridium tetani, the causative agent of tetanus disease.</title>
        <authorList>
            <person name="Brueggemann H."/>
            <person name="Baeumer S."/>
            <person name="Fricke W.F."/>
            <person name="Wiezer A."/>
            <person name="Liesegang H."/>
            <person name="Decker I."/>
            <person name="Herzberg C."/>
            <person name="Martinez-Arias R."/>
            <person name="Merkl R."/>
            <person name="Henne A."/>
            <person name="Gottschalk G."/>
        </authorList>
    </citation>
    <scope>NUCLEOTIDE SEQUENCE [LARGE SCALE GENOMIC DNA]</scope>
    <source>
        <strain>Massachusetts / E88</strain>
    </source>
</reference>
<organism>
    <name type="scientific">Clostridium tetani (strain Massachusetts / E88)</name>
    <dbReference type="NCBI Taxonomy" id="212717"/>
    <lineage>
        <taxon>Bacteria</taxon>
        <taxon>Bacillati</taxon>
        <taxon>Bacillota</taxon>
        <taxon>Clostridia</taxon>
        <taxon>Eubacteriales</taxon>
        <taxon>Clostridiaceae</taxon>
        <taxon>Clostridium</taxon>
    </lineage>
</organism>
<sequence length="156" mass="18154">MEIIIIVLGIILDRVTKLWAIKRLSIGEDIVVIKDFFSFSYLENRGAAFGIFKDKQLFLISITMVAILLMMFYLFINKTNPKILKISLSLIISGAIGNLIDRIKYRYVVDFIFFHYKDKYHFPIFNIADVLVSLGTILLIIFIIKEDGYEDRKIFS</sequence>
<accession>Q894D4</accession>
<proteinExistence type="inferred from homology"/>
<keyword id="KW-0064">Aspartyl protease</keyword>
<keyword id="KW-1003">Cell membrane</keyword>
<keyword id="KW-0378">Hydrolase</keyword>
<keyword id="KW-0472">Membrane</keyword>
<keyword id="KW-0645">Protease</keyword>
<keyword id="KW-1185">Reference proteome</keyword>
<keyword id="KW-0812">Transmembrane</keyword>
<keyword id="KW-1133">Transmembrane helix</keyword>
<protein>
    <recommendedName>
        <fullName evidence="1">Lipoprotein signal peptidase</fullName>
        <ecNumber evidence="1">3.4.23.36</ecNumber>
    </recommendedName>
    <alternativeName>
        <fullName evidence="1">Prolipoprotein signal peptidase</fullName>
    </alternativeName>
    <alternativeName>
        <fullName evidence="1">Signal peptidase II</fullName>
        <shortName evidence="1">SPase II</shortName>
    </alternativeName>
</protein>